<keyword id="KW-0067">ATP-binding</keyword>
<keyword id="KW-0963">Cytoplasm</keyword>
<keyword id="KW-0206">Cytoskeleton</keyword>
<keyword id="KW-0378">Hydrolase</keyword>
<keyword id="KW-0547">Nucleotide-binding</keyword>
<keyword id="KW-0558">Oxidation</keyword>
<keyword id="KW-1185">Reference proteome</keyword>
<feature type="chain" id="PRO_0000089053" description="Actin, cytoplasmic type 5">
    <location>
        <begin position="1"/>
        <end position="376"/>
    </location>
</feature>
<feature type="modified residue" description="Methionine (R)-sulfoxide" evidence="1">
    <location>
        <position position="45"/>
    </location>
</feature>
<feature type="modified residue" description="Methionine (R)-sulfoxide" evidence="1">
    <location>
        <position position="48"/>
    </location>
</feature>
<protein>
    <recommendedName>
        <fullName>Actin, cytoplasmic type 5</fullName>
        <ecNumber evidence="2">3.6.4.-</ecNumber>
    </recommendedName>
</protein>
<evidence type="ECO:0000250" key="1"/>
<evidence type="ECO:0000250" key="2">
    <source>
        <dbReference type="UniProtKB" id="P68137"/>
    </source>
</evidence>
<evidence type="ECO:0000305" key="3"/>
<organism>
    <name type="scientific">Xenopus laevis</name>
    <name type="common">African clawed frog</name>
    <dbReference type="NCBI Taxonomy" id="8355"/>
    <lineage>
        <taxon>Eukaryota</taxon>
        <taxon>Metazoa</taxon>
        <taxon>Chordata</taxon>
        <taxon>Craniata</taxon>
        <taxon>Vertebrata</taxon>
        <taxon>Euteleostomi</taxon>
        <taxon>Amphibia</taxon>
        <taxon>Batrachia</taxon>
        <taxon>Anura</taxon>
        <taxon>Pipoidea</taxon>
        <taxon>Pipidae</taxon>
        <taxon>Xenopodinae</taxon>
        <taxon>Xenopus</taxon>
        <taxon>Xenopus</taxon>
    </lineage>
</organism>
<comment type="function">
    <text>Actins are highly conserved proteins that are involved in various types of cell motility and are ubiquitously expressed in all eukaryotic cells.</text>
</comment>
<comment type="catalytic activity">
    <reaction evidence="2">
        <text>ATP + H2O = ADP + phosphate + H(+)</text>
        <dbReference type="Rhea" id="RHEA:13065"/>
        <dbReference type="ChEBI" id="CHEBI:15377"/>
        <dbReference type="ChEBI" id="CHEBI:15378"/>
        <dbReference type="ChEBI" id="CHEBI:30616"/>
        <dbReference type="ChEBI" id="CHEBI:43474"/>
        <dbReference type="ChEBI" id="CHEBI:456216"/>
    </reaction>
</comment>
<comment type="subunit">
    <text>Polymerization of globular actin (G-actin) leads to a structural filament (F-actin) in the form of a two-stranded helix. Each actin can bind to 4 others.</text>
</comment>
<comment type="subcellular location">
    <subcellularLocation>
        <location>Cytoplasm</location>
        <location>Cytoskeleton</location>
    </subcellularLocation>
</comment>
<comment type="PTM">
    <text evidence="1">Oxidation of Met-45 and Met-48 by MICALs (mical1, mical2 or mical3) to form methionine sulfoxide promotes actin filament depolymerization. Mical1 and mical2 produce the (R)-S-oxide form. The (R)-S-oxide form is reverted by msrb1 and msrb2, which promote actin repolymerization (By similarity).</text>
</comment>
<comment type="similarity">
    <text evidence="3">Belongs to the actin family.</text>
</comment>
<sequence length="376" mass="41850">MADEEIAALVIDNGSGMCKAGFAGDDAPRAVFPSIVGRPRHQGVMVGMGQKDSYVGDEAQSKRGILTLKYPIEHGIVTNWDDMEKIWHHTFYNELRVAPEEHPVLLTEAPLNPKANREKMTQIMFETFNTPAMYVAIQAVLSLYASGRTTGIVMDSGDGVTHTVPIYEGYALPHAILRLDLAGRDLTDYLMKILTERGYSFTTTAEREIVRDIKEKLCYVALDFEQEMATAASSSSLEKSYELPDGQVITIGNERFRCPEALFQPSFLGMESCGIHETTFNSIMKCDVDIRKDLYANTVLSGGTTMYPGIADRMQKEITALAPSTMKIKIIAPPERKYSVWIGGSILASLSTFQQMWISKQEYDESGPSIVHRKCF</sequence>
<accession>P53505</accession>
<name>ACT5_XENLA</name>
<dbReference type="EC" id="3.6.4.-" evidence="2"/>
<dbReference type="EMBL" id="M24769">
    <property type="protein sequence ID" value="AAA49638.1"/>
    <property type="molecule type" value="Genomic_DNA"/>
</dbReference>
<dbReference type="PIR" id="A43552">
    <property type="entry name" value="A43552"/>
</dbReference>
<dbReference type="RefSeq" id="NP_001165634.1">
    <property type="nucleotide sequence ID" value="NM_001172163.1"/>
</dbReference>
<dbReference type="RefSeq" id="XP_018092637.1">
    <property type="nucleotide sequence ID" value="XM_018237148.2"/>
</dbReference>
<dbReference type="SMR" id="P53505"/>
<dbReference type="BioGRID" id="1078942">
    <property type="interactions" value="1"/>
</dbReference>
<dbReference type="IntAct" id="P53505">
    <property type="interactions" value="1"/>
</dbReference>
<dbReference type="GeneID" id="100337595"/>
<dbReference type="KEGG" id="xla:100337595"/>
<dbReference type="AGR" id="Xenbase:XB-GENE-6464325"/>
<dbReference type="CTD" id="100337595"/>
<dbReference type="Xenbase" id="XB-GENE-6464325">
    <property type="gene designation" value="actg1.S"/>
</dbReference>
<dbReference type="OMA" id="YNEFRIA"/>
<dbReference type="OrthoDB" id="8990836at2759"/>
<dbReference type="Proteomes" id="UP000186698">
    <property type="component" value="Chromosome 9_10S"/>
</dbReference>
<dbReference type="Bgee" id="100337595">
    <property type="expression patterns" value="Expressed in lung and 19 other cell types or tissues"/>
</dbReference>
<dbReference type="GO" id="GO:0015629">
    <property type="term" value="C:actin cytoskeleton"/>
    <property type="evidence" value="ECO:0000318"/>
    <property type="project" value="GO_Central"/>
</dbReference>
<dbReference type="GO" id="GO:0005884">
    <property type="term" value="C:actin filament"/>
    <property type="evidence" value="ECO:0000318"/>
    <property type="project" value="GO_Central"/>
</dbReference>
<dbReference type="GO" id="GO:0030424">
    <property type="term" value="C:axon"/>
    <property type="evidence" value="ECO:0000318"/>
    <property type="project" value="GO_Central"/>
</dbReference>
<dbReference type="GO" id="GO:0005737">
    <property type="term" value="C:cytoplasm"/>
    <property type="evidence" value="ECO:0000318"/>
    <property type="project" value="GO_Central"/>
</dbReference>
<dbReference type="GO" id="GO:0005856">
    <property type="term" value="C:cytoskeleton"/>
    <property type="evidence" value="ECO:0000250"/>
    <property type="project" value="AgBase"/>
</dbReference>
<dbReference type="GO" id="GO:0097433">
    <property type="term" value="C:dense body"/>
    <property type="evidence" value="ECO:0000250"/>
    <property type="project" value="AgBase"/>
</dbReference>
<dbReference type="GO" id="GO:0005925">
    <property type="term" value="C:focal adhesion"/>
    <property type="evidence" value="ECO:0000250"/>
    <property type="project" value="AgBase"/>
</dbReference>
<dbReference type="GO" id="GO:0016020">
    <property type="term" value="C:membrane"/>
    <property type="evidence" value="ECO:0000318"/>
    <property type="project" value="GO_Central"/>
</dbReference>
<dbReference type="GO" id="GO:0035267">
    <property type="term" value="C:NuA4 histone acetyltransferase complex"/>
    <property type="evidence" value="ECO:0000318"/>
    <property type="project" value="GO_Central"/>
</dbReference>
<dbReference type="GO" id="GO:0005886">
    <property type="term" value="C:plasma membrane"/>
    <property type="evidence" value="ECO:0000250"/>
    <property type="project" value="AgBase"/>
</dbReference>
<dbReference type="GO" id="GO:0045202">
    <property type="term" value="C:synapse"/>
    <property type="evidence" value="ECO:0000318"/>
    <property type="project" value="GO_Central"/>
</dbReference>
<dbReference type="GO" id="GO:0005524">
    <property type="term" value="F:ATP binding"/>
    <property type="evidence" value="ECO:0007669"/>
    <property type="project" value="UniProtKB-KW"/>
</dbReference>
<dbReference type="GO" id="GO:0016787">
    <property type="term" value="F:hydrolase activity"/>
    <property type="evidence" value="ECO:0007669"/>
    <property type="project" value="UniProtKB-KW"/>
</dbReference>
<dbReference type="GO" id="GO:0019901">
    <property type="term" value="F:protein kinase binding"/>
    <property type="evidence" value="ECO:0000318"/>
    <property type="project" value="GO_Central"/>
</dbReference>
<dbReference type="GO" id="GO:0098973">
    <property type="term" value="F:structural constituent of postsynaptic actin cytoskeleton"/>
    <property type="evidence" value="ECO:0000318"/>
    <property type="project" value="GO_Central"/>
</dbReference>
<dbReference type="GO" id="GO:0007409">
    <property type="term" value="P:axonogenesis"/>
    <property type="evidence" value="ECO:0000318"/>
    <property type="project" value="GO_Central"/>
</dbReference>
<dbReference type="GO" id="GO:0048870">
    <property type="term" value="P:cell motility"/>
    <property type="evidence" value="ECO:0000318"/>
    <property type="project" value="GO_Central"/>
</dbReference>
<dbReference type="CDD" id="cd10224">
    <property type="entry name" value="ASKHA_NBD_actin"/>
    <property type="match status" value="1"/>
</dbReference>
<dbReference type="FunFam" id="2.30.36.70:FF:000001">
    <property type="entry name" value="Actin, alpha skeletal muscle"/>
    <property type="match status" value="1"/>
</dbReference>
<dbReference type="FunFam" id="3.30.420.40:FF:000131">
    <property type="entry name" value="Actin, alpha skeletal muscle"/>
    <property type="match status" value="1"/>
</dbReference>
<dbReference type="FunFam" id="3.30.420.40:FF:000291">
    <property type="entry name" value="Actin, alpha skeletal muscle"/>
    <property type="match status" value="1"/>
</dbReference>
<dbReference type="FunFam" id="3.90.640.10:FF:000047">
    <property type="entry name" value="Actin, alpha skeletal muscle"/>
    <property type="match status" value="1"/>
</dbReference>
<dbReference type="FunFam" id="3.30.420.40:FF:000058">
    <property type="entry name" value="Putative actin-related protein 5"/>
    <property type="match status" value="1"/>
</dbReference>
<dbReference type="Gene3D" id="3.30.420.40">
    <property type="match status" value="2"/>
</dbReference>
<dbReference type="Gene3D" id="3.90.640.10">
    <property type="entry name" value="Actin, Chain A, domain 4"/>
    <property type="match status" value="1"/>
</dbReference>
<dbReference type="InterPro" id="IPR004000">
    <property type="entry name" value="Actin"/>
</dbReference>
<dbReference type="InterPro" id="IPR020902">
    <property type="entry name" value="Actin/actin-like_CS"/>
</dbReference>
<dbReference type="InterPro" id="IPR004001">
    <property type="entry name" value="Actin_CS"/>
</dbReference>
<dbReference type="InterPro" id="IPR043129">
    <property type="entry name" value="ATPase_NBD"/>
</dbReference>
<dbReference type="PANTHER" id="PTHR11937">
    <property type="entry name" value="ACTIN"/>
    <property type="match status" value="1"/>
</dbReference>
<dbReference type="Pfam" id="PF00022">
    <property type="entry name" value="Actin"/>
    <property type="match status" value="1"/>
</dbReference>
<dbReference type="PRINTS" id="PR00190">
    <property type="entry name" value="ACTIN"/>
</dbReference>
<dbReference type="SMART" id="SM00268">
    <property type="entry name" value="ACTIN"/>
    <property type="match status" value="1"/>
</dbReference>
<dbReference type="SUPFAM" id="SSF53067">
    <property type="entry name" value="Actin-like ATPase domain"/>
    <property type="match status" value="2"/>
</dbReference>
<dbReference type="PROSITE" id="PS00406">
    <property type="entry name" value="ACTINS_1"/>
    <property type="match status" value="1"/>
</dbReference>
<dbReference type="PROSITE" id="PS00432">
    <property type="entry name" value="ACTINS_2"/>
    <property type="match status" value="1"/>
</dbReference>
<dbReference type="PROSITE" id="PS01132">
    <property type="entry name" value="ACTINS_ACT_LIKE"/>
    <property type="match status" value="1"/>
</dbReference>
<proteinExistence type="inferred from homology"/>
<reference key="1">
    <citation type="journal article" date="1987" name="Development">
        <title>An amphibian cytoskeletal-type actin gene is expressed exclusively in muscle tissue.</title>
        <authorList>
            <person name="Mohun T.J."/>
            <person name="Garrett N."/>
        </authorList>
    </citation>
    <scope>NUCLEOTIDE SEQUENCE [GENOMIC DNA]</scope>
</reference>